<sequence>MAPSTLICDTDSWQNLKTHVAEIKKTHLRDLMSDADRCKSMMVEFDGLLLDYSRQNATHDTMSKLFQLAEASHLKDKINQMFNGEHINSTENRSVLHVALRASRDAVINGDGKNVVPDVWQVLDKIRDFSEKIRSGSWVGVTGKPLTNVVAVGIGGSFLGPLFVHTALQTESEAAECAKGRQLRFLANVDPIDVAKNISGLNPETTLVVVVSKTFTTAETMLNARTLREWISSALGPAAVAKHMVAVSTNLTLVEKFGIDPKNAFAFWDWVGGRYSVCSAVGVLPLSLQYGFPIVEKFLKGASSIDQHFHSAPLEKNLPVLLGLLSLWNVSFLGHPARAILPYCQALEKFAPHIQQVSMESNGKGVSIDGVVLPFEAGEIDFGEPGTNGQHSFYQLIHQGRVIPCDFIGIAKSQQPVYLKGEVVSNHDELMSNFFAQPDALAYGKTQEELQKENISPHLVPHKTFTGNRPSLSLLLPSLTAYNVGQLLAIYEHRVAVEGFVWGINSFDQWGVELGKSLANQVRKQLHASRTNGEAVKGFNFSTTTVMAKYLQETSDVPAELPTKLP</sequence>
<organism>
    <name type="scientific">Spinacia oleracea</name>
    <name type="common">Spinach</name>
    <dbReference type="NCBI Taxonomy" id="3562"/>
    <lineage>
        <taxon>Eukaryota</taxon>
        <taxon>Viridiplantae</taxon>
        <taxon>Streptophyta</taxon>
        <taxon>Embryophyta</taxon>
        <taxon>Tracheophyta</taxon>
        <taxon>Spermatophyta</taxon>
        <taxon>Magnoliopsida</taxon>
        <taxon>eudicotyledons</taxon>
        <taxon>Gunneridae</taxon>
        <taxon>Pentapetalae</taxon>
        <taxon>Caryophyllales</taxon>
        <taxon>Chenopodiaceae</taxon>
        <taxon>Chenopodioideae</taxon>
        <taxon>Anserineae</taxon>
        <taxon>Spinacia</taxon>
    </lineage>
</organism>
<comment type="catalytic activity">
    <reaction>
        <text>alpha-D-glucose 6-phosphate = beta-D-fructose 6-phosphate</text>
        <dbReference type="Rhea" id="RHEA:11816"/>
        <dbReference type="ChEBI" id="CHEBI:57634"/>
        <dbReference type="ChEBI" id="CHEBI:58225"/>
        <dbReference type="EC" id="5.3.1.9"/>
    </reaction>
</comment>
<comment type="pathway">
    <text>Carbohydrate degradation; glycolysis; D-glyceraldehyde 3-phosphate and glycerone phosphate from D-glucose: step 2/4.</text>
</comment>
<comment type="subunit">
    <text evidence="1">Homodimer.</text>
</comment>
<comment type="subcellular location">
    <subcellularLocation>
        <location evidence="1">Cytoplasm</location>
    </subcellularLocation>
</comment>
<comment type="similarity">
    <text evidence="2">Belongs to the GPI family.</text>
</comment>
<proteinExistence type="evidence at transcript level"/>
<gene>
    <name type="primary">PGIC</name>
    <name type="synonym">GPIS</name>
</gene>
<evidence type="ECO:0000250" key="1"/>
<evidence type="ECO:0000305" key="2"/>
<name>G6PI_SPIOL</name>
<feature type="chain" id="PRO_0000180568" description="Glucose-6-phosphate isomerase, cytosolic">
    <location>
        <begin position="1"/>
        <end position="566"/>
    </location>
</feature>
<feature type="active site" description="Proton donor" evidence="1">
    <location>
        <position position="360"/>
    </location>
</feature>
<feature type="active site" evidence="1">
    <location>
        <position position="391"/>
    </location>
</feature>
<feature type="active site" evidence="1">
    <location>
        <position position="516"/>
    </location>
</feature>
<protein>
    <recommendedName>
        <fullName>Glucose-6-phosphate isomerase, cytosolic</fullName>
        <shortName>GPI</shortName>
        <ecNumber>5.3.1.9</ecNumber>
    </recommendedName>
    <alternativeName>
        <fullName>Phosphoglucose isomerase</fullName>
        <shortName>PGI</shortName>
    </alternativeName>
    <alternativeName>
        <fullName>Phosphohexose isomerase</fullName>
        <shortName>PHI</shortName>
    </alternativeName>
</protein>
<reference key="1">
    <citation type="journal article" date="1998" name="Gene">
        <title>Eubacterial origin of nuclear genes for chloroplast and cytosolic glucose-6-phosphate isomerase from spinach: sampling eubacterial gene diversity in eukaryotic chromosomes through symbiosis.</title>
        <authorList>
            <person name="Nowitzki U."/>
            <person name="Flechner A."/>
            <person name="Kellermann J."/>
            <person name="Hasegawa M."/>
            <person name="Schnarrenberger C."/>
            <person name="Martin W."/>
        </authorList>
    </citation>
    <scope>NUCLEOTIDE SEQUENCE [MRNA]</scope>
</reference>
<keyword id="KW-0963">Cytoplasm</keyword>
<keyword id="KW-0312">Gluconeogenesis</keyword>
<keyword id="KW-0324">Glycolysis</keyword>
<keyword id="KW-0413">Isomerase</keyword>
<keyword id="KW-1185">Reference proteome</keyword>
<dbReference type="EC" id="5.3.1.9"/>
<dbReference type="EMBL" id="AJ000266">
    <property type="protein sequence ID" value="CAA03983.1"/>
    <property type="molecule type" value="mRNA"/>
</dbReference>
<dbReference type="PIR" id="T09154">
    <property type="entry name" value="T09154"/>
</dbReference>
<dbReference type="SMR" id="O82059"/>
<dbReference type="OrthoDB" id="5831190at2759"/>
<dbReference type="SABIO-RK" id="O82059"/>
<dbReference type="UniPathway" id="UPA00109">
    <property type="reaction ID" value="UER00181"/>
</dbReference>
<dbReference type="Proteomes" id="UP001155700">
    <property type="component" value="Unplaced"/>
</dbReference>
<dbReference type="GO" id="GO:0005829">
    <property type="term" value="C:cytosol"/>
    <property type="evidence" value="ECO:0000318"/>
    <property type="project" value="GO_Central"/>
</dbReference>
<dbReference type="GO" id="GO:0097367">
    <property type="term" value="F:carbohydrate derivative binding"/>
    <property type="evidence" value="ECO:0007669"/>
    <property type="project" value="InterPro"/>
</dbReference>
<dbReference type="GO" id="GO:0004347">
    <property type="term" value="F:glucose-6-phosphate isomerase activity"/>
    <property type="evidence" value="ECO:0000318"/>
    <property type="project" value="GO_Central"/>
</dbReference>
<dbReference type="GO" id="GO:0048029">
    <property type="term" value="F:monosaccharide binding"/>
    <property type="evidence" value="ECO:0000318"/>
    <property type="project" value="GO_Central"/>
</dbReference>
<dbReference type="GO" id="GO:0006094">
    <property type="term" value="P:gluconeogenesis"/>
    <property type="evidence" value="ECO:0000318"/>
    <property type="project" value="GO_Central"/>
</dbReference>
<dbReference type="GO" id="GO:0051156">
    <property type="term" value="P:glucose 6-phosphate metabolic process"/>
    <property type="evidence" value="ECO:0000318"/>
    <property type="project" value="GO_Central"/>
</dbReference>
<dbReference type="GO" id="GO:0006096">
    <property type="term" value="P:glycolytic process"/>
    <property type="evidence" value="ECO:0000318"/>
    <property type="project" value="GO_Central"/>
</dbReference>
<dbReference type="CDD" id="cd05015">
    <property type="entry name" value="SIS_PGI_1"/>
    <property type="match status" value="1"/>
</dbReference>
<dbReference type="CDD" id="cd05016">
    <property type="entry name" value="SIS_PGI_2"/>
    <property type="match status" value="1"/>
</dbReference>
<dbReference type="FunFam" id="1.10.1390.10:FF:000002">
    <property type="entry name" value="Glucose-6-phosphate isomerase"/>
    <property type="match status" value="1"/>
</dbReference>
<dbReference type="FunFam" id="3.40.50.10490:FF:000018">
    <property type="entry name" value="Glucose-6-phosphate isomerase"/>
    <property type="match status" value="1"/>
</dbReference>
<dbReference type="FunFam" id="3.40.50.10490:FF:000031">
    <property type="entry name" value="Glucose-6-phosphate isomerase"/>
    <property type="match status" value="1"/>
</dbReference>
<dbReference type="FunFam" id="3.40.50.10490:FF:000048">
    <property type="entry name" value="Glucose-6-phosphate isomerase"/>
    <property type="match status" value="1"/>
</dbReference>
<dbReference type="Gene3D" id="1.10.1390.10">
    <property type="match status" value="1"/>
</dbReference>
<dbReference type="Gene3D" id="3.40.50.10490">
    <property type="entry name" value="Glucose-6-phosphate isomerase like protein, domain 1"/>
    <property type="match status" value="3"/>
</dbReference>
<dbReference type="HAMAP" id="MF_00473">
    <property type="entry name" value="G6P_isomerase"/>
    <property type="match status" value="1"/>
</dbReference>
<dbReference type="InterPro" id="IPR001672">
    <property type="entry name" value="G6P_Isomerase"/>
</dbReference>
<dbReference type="InterPro" id="IPR023096">
    <property type="entry name" value="G6P_Isomerase_C"/>
</dbReference>
<dbReference type="InterPro" id="IPR018189">
    <property type="entry name" value="Phosphoglucose_isomerase_CS"/>
</dbReference>
<dbReference type="InterPro" id="IPR046348">
    <property type="entry name" value="SIS_dom_sf"/>
</dbReference>
<dbReference type="InterPro" id="IPR035476">
    <property type="entry name" value="SIS_PGI_1"/>
</dbReference>
<dbReference type="InterPro" id="IPR035482">
    <property type="entry name" value="SIS_PGI_2"/>
</dbReference>
<dbReference type="NCBIfam" id="NF001211">
    <property type="entry name" value="PRK00179.1"/>
    <property type="match status" value="1"/>
</dbReference>
<dbReference type="PANTHER" id="PTHR11469">
    <property type="entry name" value="GLUCOSE-6-PHOSPHATE ISOMERASE"/>
    <property type="match status" value="1"/>
</dbReference>
<dbReference type="PANTHER" id="PTHR11469:SF1">
    <property type="entry name" value="GLUCOSE-6-PHOSPHATE ISOMERASE"/>
    <property type="match status" value="1"/>
</dbReference>
<dbReference type="Pfam" id="PF00342">
    <property type="entry name" value="PGI"/>
    <property type="match status" value="1"/>
</dbReference>
<dbReference type="PRINTS" id="PR00662">
    <property type="entry name" value="G6PISOMERASE"/>
</dbReference>
<dbReference type="SUPFAM" id="SSF53697">
    <property type="entry name" value="SIS domain"/>
    <property type="match status" value="1"/>
</dbReference>
<dbReference type="PROSITE" id="PS00765">
    <property type="entry name" value="P_GLUCOSE_ISOMERASE_1"/>
    <property type="match status" value="1"/>
</dbReference>
<dbReference type="PROSITE" id="PS00174">
    <property type="entry name" value="P_GLUCOSE_ISOMERASE_2"/>
    <property type="match status" value="1"/>
</dbReference>
<dbReference type="PROSITE" id="PS51463">
    <property type="entry name" value="P_GLUCOSE_ISOMERASE_3"/>
    <property type="match status" value="1"/>
</dbReference>
<accession>O82059</accession>